<organism>
    <name type="scientific">Drosophila melanogaster</name>
    <name type="common">Fruit fly</name>
    <dbReference type="NCBI Taxonomy" id="7227"/>
    <lineage>
        <taxon>Eukaryota</taxon>
        <taxon>Metazoa</taxon>
        <taxon>Ecdysozoa</taxon>
        <taxon>Arthropoda</taxon>
        <taxon>Hexapoda</taxon>
        <taxon>Insecta</taxon>
        <taxon>Pterygota</taxon>
        <taxon>Neoptera</taxon>
        <taxon>Endopterygota</taxon>
        <taxon>Diptera</taxon>
        <taxon>Brachycera</taxon>
        <taxon>Muscomorpha</taxon>
        <taxon>Ephydroidea</taxon>
        <taxon>Drosophilidae</taxon>
        <taxon>Drosophila</taxon>
        <taxon>Sophophora</taxon>
    </lineage>
</organism>
<sequence>MALIPAVTRLTSSVIRILGCNPSAMTLQGTNTYLLGSGSRRILIDTGDEDVPQYIAHLGDVLQQEKASIDTILLTHWHHDHVGGVKSIVGTKLAEKDCRVFKFGRTDAPDVCPEIPTDIKLHPLAHNQEFTTEGANVRVVHTPGHTTDHVVLAMNEGTLFSGDCILGEGTAVFEDLFEYMKSLEKILDIKPQRIFPGHGNVIEEPIGKIEYYINHRNQREQQILQFFVQRPNENLQAMDVVKVVYKETPENLWPAAAYNVNHHLSKLEKEGKLRVSKSADEEFYVYQPTSAL</sequence>
<accession>Q9VLS9</accession>
<accession>Q8MR51</accession>
<keyword id="KW-0378">Hydrolase</keyword>
<keyword id="KW-0479">Metal-binding</keyword>
<keyword id="KW-1185">Reference proteome</keyword>
<keyword id="KW-0862">Zinc</keyword>
<name>LACB2_DROME</name>
<comment type="similarity">
    <text evidence="2">Belongs to the metallo-beta-lactamase superfamily. Glyoxalase II family.</text>
</comment>
<comment type="sequence caution" evidence="2">
    <conflict type="erroneous initiation">
        <sequence resource="EMBL-CDS" id="AAM52633"/>
    </conflict>
</comment>
<reference key="1">
    <citation type="journal article" date="2000" name="Science">
        <title>The genome sequence of Drosophila melanogaster.</title>
        <authorList>
            <person name="Adams M.D."/>
            <person name="Celniker S.E."/>
            <person name="Holt R.A."/>
            <person name="Evans C.A."/>
            <person name="Gocayne J.D."/>
            <person name="Amanatides P.G."/>
            <person name="Scherer S.E."/>
            <person name="Li P.W."/>
            <person name="Hoskins R.A."/>
            <person name="Galle R.F."/>
            <person name="George R.A."/>
            <person name="Lewis S.E."/>
            <person name="Richards S."/>
            <person name="Ashburner M."/>
            <person name="Henderson S.N."/>
            <person name="Sutton G.G."/>
            <person name="Wortman J.R."/>
            <person name="Yandell M.D."/>
            <person name="Zhang Q."/>
            <person name="Chen L.X."/>
            <person name="Brandon R.C."/>
            <person name="Rogers Y.-H.C."/>
            <person name="Blazej R.G."/>
            <person name="Champe M."/>
            <person name="Pfeiffer B.D."/>
            <person name="Wan K.H."/>
            <person name="Doyle C."/>
            <person name="Baxter E.G."/>
            <person name="Helt G."/>
            <person name="Nelson C.R."/>
            <person name="Miklos G.L.G."/>
            <person name="Abril J.F."/>
            <person name="Agbayani A."/>
            <person name="An H.-J."/>
            <person name="Andrews-Pfannkoch C."/>
            <person name="Baldwin D."/>
            <person name="Ballew R.M."/>
            <person name="Basu A."/>
            <person name="Baxendale J."/>
            <person name="Bayraktaroglu L."/>
            <person name="Beasley E.M."/>
            <person name="Beeson K.Y."/>
            <person name="Benos P.V."/>
            <person name="Berman B.P."/>
            <person name="Bhandari D."/>
            <person name="Bolshakov S."/>
            <person name="Borkova D."/>
            <person name="Botchan M.R."/>
            <person name="Bouck J."/>
            <person name="Brokstein P."/>
            <person name="Brottier P."/>
            <person name="Burtis K.C."/>
            <person name="Busam D.A."/>
            <person name="Butler H."/>
            <person name="Cadieu E."/>
            <person name="Center A."/>
            <person name="Chandra I."/>
            <person name="Cherry J.M."/>
            <person name="Cawley S."/>
            <person name="Dahlke C."/>
            <person name="Davenport L.B."/>
            <person name="Davies P."/>
            <person name="de Pablos B."/>
            <person name="Delcher A."/>
            <person name="Deng Z."/>
            <person name="Mays A.D."/>
            <person name="Dew I."/>
            <person name="Dietz S.M."/>
            <person name="Dodson K."/>
            <person name="Doup L.E."/>
            <person name="Downes M."/>
            <person name="Dugan-Rocha S."/>
            <person name="Dunkov B.C."/>
            <person name="Dunn P."/>
            <person name="Durbin K.J."/>
            <person name="Evangelista C.C."/>
            <person name="Ferraz C."/>
            <person name="Ferriera S."/>
            <person name="Fleischmann W."/>
            <person name="Fosler C."/>
            <person name="Gabrielian A.E."/>
            <person name="Garg N.S."/>
            <person name="Gelbart W.M."/>
            <person name="Glasser K."/>
            <person name="Glodek A."/>
            <person name="Gong F."/>
            <person name="Gorrell J.H."/>
            <person name="Gu Z."/>
            <person name="Guan P."/>
            <person name="Harris M."/>
            <person name="Harris N.L."/>
            <person name="Harvey D.A."/>
            <person name="Heiman T.J."/>
            <person name="Hernandez J.R."/>
            <person name="Houck J."/>
            <person name="Hostin D."/>
            <person name="Houston K.A."/>
            <person name="Howland T.J."/>
            <person name="Wei M.-H."/>
            <person name="Ibegwam C."/>
            <person name="Jalali M."/>
            <person name="Kalush F."/>
            <person name="Karpen G.H."/>
            <person name="Ke Z."/>
            <person name="Kennison J.A."/>
            <person name="Ketchum K.A."/>
            <person name="Kimmel B.E."/>
            <person name="Kodira C.D."/>
            <person name="Kraft C.L."/>
            <person name="Kravitz S."/>
            <person name="Kulp D."/>
            <person name="Lai Z."/>
            <person name="Lasko P."/>
            <person name="Lei Y."/>
            <person name="Levitsky A.A."/>
            <person name="Li J.H."/>
            <person name="Li Z."/>
            <person name="Liang Y."/>
            <person name="Lin X."/>
            <person name="Liu X."/>
            <person name="Mattei B."/>
            <person name="McIntosh T.C."/>
            <person name="McLeod M.P."/>
            <person name="McPherson D."/>
            <person name="Merkulov G."/>
            <person name="Milshina N.V."/>
            <person name="Mobarry C."/>
            <person name="Morris J."/>
            <person name="Moshrefi A."/>
            <person name="Mount S.M."/>
            <person name="Moy M."/>
            <person name="Murphy B."/>
            <person name="Murphy L."/>
            <person name="Muzny D.M."/>
            <person name="Nelson D.L."/>
            <person name="Nelson D.R."/>
            <person name="Nelson K.A."/>
            <person name="Nixon K."/>
            <person name="Nusskern D.R."/>
            <person name="Pacleb J.M."/>
            <person name="Palazzolo M."/>
            <person name="Pittman G.S."/>
            <person name="Pan S."/>
            <person name="Pollard J."/>
            <person name="Puri V."/>
            <person name="Reese M.G."/>
            <person name="Reinert K."/>
            <person name="Remington K."/>
            <person name="Saunders R.D.C."/>
            <person name="Scheeler F."/>
            <person name="Shen H."/>
            <person name="Shue B.C."/>
            <person name="Siden-Kiamos I."/>
            <person name="Simpson M."/>
            <person name="Skupski M.P."/>
            <person name="Smith T.J."/>
            <person name="Spier E."/>
            <person name="Spradling A.C."/>
            <person name="Stapleton M."/>
            <person name="Strong R."/>
            <person name="Sun E."/>
            <person name="Svirskas R."/>
            <person name="Tector C."/>
            <person name="Turner R."/>
            <person name="Venter E."/>
            <person name="Wang A.H."/>
            <person name="Wang X."/>
            <person name="Wang Z.-Y."/>
            <person name="Wassarman D.A."/>
            <person name="Weinstock G.M."/>
            <person name="Weissenbach J."/>
            <person name="Williams S.M."/>
            <person name="Woodage T."/>
            <person name="Worley K.C."/>
            <person name="Wu D."/>
            <person name="Yang S."/>
            <person name="Yao Q.A."/>
            <person name="Ye J."/>
            <person name="Yeh R.-F."/>
            <person name="Zaveri J.S."/>
            <person name="Zhan M."/>
            <person name="Zhang G."/>
            <person name="Zhao Q."/>
            <person name="Zheng L."/>
            <person name="Zheng X.H."/>
            <person name="Zhong F.N."/>
            <person name="Zhong W."/>
            <person name="Zhou X."/>
            <person name="Zhu S.C."/>
            <person name="Zhu X."/>
            <person name="Smith H.O."/>
            <person name="Gibbs R.A."/>
            <person name="Myers E.W."/>
            <person name="Rubin G.M."/>
            <person name="Venter J.C."/>
        </authorList>
    </citation>
    <scope>NUCLEOTIDE SEQUENCE [LARGE SCALE GENOMIC DNA]</scope>
    <source>
        <strain>Berkeley</strain>
    </source>
</reference>
<reference key="2">
    <citation type="journal article" date="2002" name="Genome Biol.">
        <title>Annotation of the Drosophila melanogaster euchromatic genome: a systematic review.</title>
        <authorList>
            <person name="Misra S."/>
            <person name="Crosby M.A."/>
            <person name="Mungall C.J."/>
            <person name="Matthews B.B."/>
            <person name="Campbell K.S."/>
            <person name="Hradecky P."/>
            <person name="Huang Y."/>
            <person name="Kaminker J.S."/>
            <person name="Millburn G.H."/>
            <person name="Prochnik S.E."/>
            <person name="Smith C.D."/>
            <person name="Tupy J.L."/>
            <person name="Whitfield E.J."/>
            <person name="Bayraktaroglu L."/>
            <person name="Berman B.P."/>
            <person name="Bettencourt B.R."/>
            <person name="Celniker S.E."/>
            <person name="de Grey A.D.N.J."/>
            <person name="Drysdale R.A."/>
            <person name="Harris N.L."/>
            <person name="Richter J."/>
            <person name="Russo S."/>
            <person name="Schroeder A.J."/>
            <person name="Shu S.Q."/>
            <person name="Stapleton M."/>
            <person name="Yamada C."/>
            <person name="Ashburner M."/>
            <person name="Gelbart W.M."/>
            <person name="Rubin G.M."/>
            <person name="Lewis S.E."/>
        </authorList>
    </citation>
    <scope>GENOME REANNOTATION</scope>
    <source>
        <strain>Berkeley</strain>
    </source>
</reference>
<reference key="3">
    <citation type="journal article" date="2002" name="Genome Biol.">
        <title>A Drosophila full-length cDNA resource.</title>
        <authorList>
            <person name="Stapleton M."/>
            <person name="Carlson J.W."/>
            <person name="Brokstein P."/>
            <person name="Yu C."/>
            <person name="Champe M."/>
            <person name="George R.A."/>
            <person name="Guarin H."/>
            <person name="Kronmiller B."/>
            <person name="Pacleb J.M."/>
            <person name="Park S."/>
            <person name="Wan K.H."/>
            <person name="Rubin G.M."/>
            <person name="Celniker S.E."/>
        </authorList>
    </citation>
    <scope>NUCLEOTIDE SEQUENCE [LARGE SCALE MRNA]</scope>
    <source>
        <strain>Berkeley</strain>
        <tissue>Head</tissue>
    </source>
</reference>
<feature type="chain" id="PRO_0000315750" description="Beta-lactamase-like protein 2 homolog">
    <location>
        <begin position="1"/>
        <end position="292"/>
    </location>
</feature>
<feature type="binding site" evidence="1">
    <location>
        <position position="76"/>
    </location>
    <ligand>
        <name>Zn(2+)</name>
        <dbReference type="ChEBI" id="CHEBI:29105"/>
        <label>1</label>
    </ligand>
</feature>
<feature type="binding site" evidence="1">
    <location>
        <position position="78"/>
    </location>
    <ligand>
        <name>Zn(2+)</name>
        <dbReference type="ChEBI" id="CHEBI:29105"/>
        <label>1</label>
    </ligand>
</feature>
<feature type="binding site" evidence="1">
    <location>
        <position position="80"/>
    </location>
    <ligand>
        <name>Zn(2+)</name>
        <dbReference type="ChEBI" id="CHEBI:29105"/>
        <label>2</label>
    </ligand>
</feature>
<feature type="binding site" evidence="1">
    <location>
        <position position="81"/>
    </location>
    <ligand>
        <name>Zn(2+)</name>
        <dbReference type="ChEBI" id="CHEBI:29105"/>
        <label>2</label>
    </ligand>
</feature>
<feature type="binding site" evidence="1">
    <location>
        <position position="145"/>
    </location>
    <ligand>
        <name>Zn(2+)</name>
        <dbReference type="ChEBI" id="CHEBI:29105"/>
        <label>1</label>
    </ligand>
</feature>
<feature type="binding site" evidence="1">
    <location>
        <position position="163"/>
    </location>
    <ligand>
        <name>Zn(2+)</name>
        <dbReference type="ChEBI" id="CHEBI:29105"/>
        <label>1</label>
    </ligand>
</feature>
<feature type="binding site" evidence="1">
    <location>
        <position position="163"/>
    </location>
    <ligand>
        <name>Zn(2+)</name>
        <dbReference type="ChEBI" id="CHEBI:29105"/>
        <label>2</label>
    </ligand>
</feature>
<feature type="binding site" evidence="1">
    <location>
        <position position="198"/>
    </location>
    <ligand>
        <name>Zn(2+)</name>
        <dbReference type="ChEBI" id="CHEBI:29105"/>
        <label>2</label>
    </ligand>
</feature>
<protein>
    <recommendedName>
        <fullName>Beta-lactamase-like protein 2 homolog</fullName>
        <ecNumber>3.-.-.-</ecNumber>
    </recommendedName>
</protein>
<evidence type="ECO:0000250" key="1"/>
<evidence type="ECO:0000305" key="2"/>
<dbReference type="EC" id="3.-.-.-"/>
<dbReference type="EMBL" id="AE014134">
    <property type="protein sequence ID" value="AAF52605.1"/>
    <property type="molecule type" value="Genomic_DNA"/>
</dbReference>
<dbReference type="EMBL" id="AY122121">
    <property type="protein sequence ID" value="AAM52633.1"/>
    <property type="status" value="ALT_INIT"/>
    <property type="molecule type" value="mRNA"/>
</dbReference>
<dbReference type="RefSeq" id="NP_609183.1">
    <property type="nucleotide sequence ID" value="NM_135339.4"/>
</dbReference>
<dbReference type="SMR" id="Q9VLS9"/>
<dbReference type="BioGRID" id="60236">
    <property type="interactions" value="2"/>
</dbReference>
<dbReference type="FunCoup" id="Q9VLS9">
    <property type="interactions" value="1211"/>
</dbReference>
<dbReference type="IntAct" id="Q9VLS9">
    <property type="interactions" value="1"/>
</dbReference>
<dbReference type="STRING" id="7227.FBpp0079258"/>
<dbReference type="PaxDb" id="7227-FBpp0079258"/>
<dbReference type="DNASU" id="34106"/>
<dbReference type="EnsemblMetazoa" id="FBtr0079642">
    <property type="protein sequence ID" value="FBpp0079258"/>
    <property type="gene ID" value="FBgn0031987"/>
</dbReference>
<dbReference type="GeneID" id="34106"/>
<dbReference type="KEGG" id="dme:Dmel_CG12375"/>
<dbReference type="UCSC" id="CG12375-RA">
    <property type="organism name" value="d. melanogaster"/>
</dbReference>
<dbReference type="AGR" id="FB:FBgn0031987"/>
<dbReference type="FlyBase" id="FBgn0031987">
    <property type="gene designation" value="CG12375"/>
</dbReference>
<dbReference type="VEuPathDB" id="VectorBase:FBgn0031987"/>
<dbReference type="eggNOG" id="KOG0813">
    <property type="taxonomic scope" value="Eukaryota"/>
</dbReference>
<dbReference type="GeneTree" id="ENSGT00390000001710"/>
<dbReference type="HOGENOM" id="CLU_048478_1_3_1"/>
<dbReference type="InParanoid" id="Q9VLS9"/>
<dbReference type="OMA" id="WQAMDVV"/>
<dbReference type="OrthoDB" id="17458at2759"/>
<dbReference type="PhylomeDB" id="Q9VLS9"/>
<dbReference type="BioGRID-ORCS" id="34106">
    <property type="hits" value="0 hits in 1 CRISPR screen"/>
</dbReference>
<dbReference type="GenomeRNAi" id="34106"/>
<dbReference type="PRO" id="PR:Q9VLS9"/>
<dbReference type="Proteomes" id="UP000000803">
    <property type="component" value="Chromosome 2L"/>
</dbReference>
<dbReference type="Bgee" id="FBgn0031987">
    <property type="expression patterns" value="Expressed in thoracico-abdominal ganglion (Drosophila) and 107 other cell types or tissues"/>
</dbReference>
<dbReference type="GO" id="GO:0005759">
    <property type="term" value="C:mitochondrial matrix"/>
    <property type="evidence" value="ECO:0000250"/>
    <property type="project" value="FlyBase"/>
</dbReference>
<dbReference type="GO" id="GO:0046872">
    <property type="term" value="F:metal ion binding"/>
    <property type="evidence" value="ECO:0007669"/>
    <property type="project" value="UniProtKB-KW"/>
</dbReference>
<dbReference type="GO" id="GO:0004521">
    <property type="term" value="F:RNA endonuclease activity"/>
    <property type="evidence" value="ECO:0000250"/>
    <property type="project" value="FlyBase"/>
</dbReference>
<dbReference type="GO" id="GO:0003727">
    <property type="term" value="F:single-stranded RNA binding"/>
    <property type="evidence" value="ECO:0000318"/>
    <property type="project" value="GO_Central"/>
</dbReference>
<dbReference type="GO" id="GO:0031123">
    <property type="term" value="P:RNA 3'-end processing"/>
    <property type="evidence" value="ECO:0007669"/>
    <property type="project" value="UniProtKB-ARBA"/>
</dbReference>
<dbReference type="CDD" id="cd07722">
    <property type="entry name" value="LACTB2-like_MBL-fold"/>
    <property type="match status" value="1"/>
</dbReference>
<dbReference type="FunFam" id="1.10.10.10:FF:000328">
    <property type="entry name" value="Lactamase beta 2"/>
    <property type="match status" value="1"/>
</dbReference>
<dbReference type="FunFam" id="3.60.15.10:FF:000017">
    <property type="entry name" value="Lactamase beta 2"/>
    <property type="match status" value="1"/>
</dbReference>
<dbReference type="Gene3D" id="3.60.15.10">
    <property type="entry name" value="Ribonuclease Z/Hydroxyacylglutathione hydrolase-like"/>
    <property type="match status" value="1"/>
</dbReference>
<dbReference type="Gene3D" id="1.10.10.10">
    <property type="entry name" value="Winged helix-like DNA-binding domain superfamily/Winged helix DNA-binding domain"/>
    <property type="match status" value="1"/>
</dbReference>
<dbReference type="InterPro" id="IPR047921">
    <property type="entry name" value="LACTB2-like_MBL-fold"/>
</dbReference>
<dbReference type="InterPro" id="IPR041516">
    <property type="entry name" value="LACTB2_WH"/>
</dbReference>
<dbReference type="InterPro" id="IPR001279">
    <property type="entry name" value="Metallo-B-lactamas"/>
</dbReference>
<dbReference type="InterPro" id="IPR036866">
    <property type="entry name" value="RibonucZ/Hydroxyglut_hydro"/>
</dbReference>
<dbReference type="InterPro" id="IPR050662">
    <property type="entry name" value="Sec-metab_biosynth-thioest"/>
</dbReference>
<dbReference type="InterPro" id="IPR036388">
    <property type="entry name" value="WH-like_DNA-bd_sf"/>
</dbReference>
<dbReference type="PANTHER" id="PTHR23131">
    <property type="entry name" value="ENDORIBONUCLEASE LACTB2"/>
    <property type="match status" value="1"/>
</dbReference>
<dbReference type="PANTHER" id="PTHR23131:SF0">
    <property type="entry name" value="ENDORIBONUCLEASE LACTB2"/>
    <property type="match status" value="1"/>
</dbReference>
<dbReference type="Pfam" id="PF17778">
    <property type="entry name" value="BLACT_WH"/>
    <property type="match status" value="1"/>
</dbReference>
<dbReference type="Pfam" id="PF00753">
    <property type="entry name" value="Lactamase_B"/>
    <property type="match status" value="1"/>
</dbReference>
<dbReference type="SMART" id="SM00849">
    <property type="entry name" value="Lactamase_B"/>
    <property type="match status" value="1"/>
</dbReference>
<dbReference type="SUPFAM" id="SSF56281">
    <property type="entry name" value="Metallo-hydrolase/oxidoreductase"/>
    <property type="match status" value="1"/>
</dbReference>
<proteinExistence type="evidence at transcript level"/>
<gene>
    <name type="ORF">CG12375</name>
</gene>